<organism>
    <name type="scientific">Homo sapiens</name>
    <name type="common">Human</name>
    <dbReference type="NCBI Taxonomy" id="9606"/>
    <lineage>
        <taxon>Eukaryota</taxon>
        <taxon>Metazoa</taxon>
        <taxon>Chordata</taxon>
        <taxon>Craniata</taxon>
        <taxon>Vertebrata</taxon>
        <taxon>Euteleostomi</taxon>
        <taxon>Mammalia</taxon>
        <taxon>Eutheria</taxon>
        <taxon>Euarchontoglires</taxon>
        <taxon>Primates</taxon>
        <taxon>Haplorrhini</taxon>
        <taxon>Catarrhini</taxon>
        <taxon>Hominidae</taxon>
        <taxon>Homo</taxon>
    </lineage>
</organism>
<dbReference type="EMBL" id="AB044137">
    <property type="protein sequence ID" value="BAB18974.1"/>
    <property type="molecule type" value="mRNA"/>
</dbReference>
<dbReference type="EMBL" id="Z94277">
    <property type="status" value="NOT_ANNOTATED_CDS"/>
    <property type="molecule type" value="Genomic_DNA"/>
</dbReference>
<dbReference type="EMBL" id="BC056673">
    <property type="status" value="NOT_ANNOTATED_CDS"/>
    <property type="molecule type" value="mRNA"/>
</dbReference>
<dbReference type="CCDS" id="CCDS87739.1"/>
<dbReference type="RefSeq" id="NP_079486.1">
    <property type="nucleotide sequence ID" value="NM_025210.2"/>
</dbReference>
<dbReference type="SMR" id="O14990"/>
<dbReference type="IntAct" id="O14990">
    <property type="interactions" value="3"/>
</dbReference>
<dbReference type="STRING" id="9606.ENSP00000490336"/>
<dbReference type="GlyGen" id="O14990">
    <property type="glycosylation" value="2 sites, 1 O-linked glycan (2 sites)"/>
</dbReference>
<dbReference type="iPTMnet" id="O14990"/>
<dbReference type="PhosphoSitePlus" id="O14990"/>
<dbReference type="BioMuta" id="PPP1R2P9"/>
<dbReference type="jPOST" id="O14990"/>
<dbReference type="MassIVE" id="O14990"/>
<dbReference type="PeptideAtlas" id="O14990"/>
<dbReference type="ProteomicsDB" id="48362"/>
<dbReference type="Antibodypedia" id="78912">
    <property type="antibodies" value="11 antibodies from 9 providers"/>
</dbReference>
<dbReference type="Ensembl" id="ENST00000378131.4">
    <property type="protein sequence ID" value="ENSP00000490336.1"/>
    <property type="gene ID" value="ENSG00000102055.7"/>
</dbReference>
<dbReference type="GeneID" id="80316"/>
<dbReference type="MANE-Select" id="ENST00000378131.4">
    <property type="protein sequence ID" value="ENSP00000490336.1"/>
    <property type="RefSeq nucleotide sequence ID" value="NM_025210.2"/>
    <property type="RefSeq protein sequence ID" value="NP_079486.1"/>
</dbReference>
<dbReference type="AGR" id="HGNC:16324"/>
<dbReference type="GeneCards" id="PPP1R2C"/>
<dbReference type="HGNC" id="HGNC:16324">
    <property type="gene designation" value="PPP1R2C"/>
</dbReference>
<dbReference type="HPA" id="ENSG00000102055">
    <property type="expression patterns" value="Tissue enriched (testis)"/>
</dbReference>
<dbReference type="MIM" id="301017">
    <property type="type" value="gene"/>
</dbReference>
<dbReference type="neXtProt" id="NX_O14990"/>
<dbReference type="OpenTargets" id="ENSG00000102055"/>
<dbReference type="VEuPathDB" id="HostDB:ENSG00000102055"/>
<dbReference type="GeneTree" id="ENSGT00940000164483"/>
<dbReference type="InParanoid" id="O14990"/>
<dbReference type="OMA" id="KWDESSI"/>
<dbReference type="OrthoDB" id="551302at2759"/>
<dbReference type="PAN-GO" id="O14990">
    <property type="GO annotations" value="2 GO annotations based on evolutionary models"/>
</dbReference>
<dbReference type="PhylomeDB" id="O14990"/>
<dbReference type="PathwayCommons" id="O14990"/>
<dbReference type="SignaLink" id="O14990"/>
<dbReference type="Pharos" id="O14990">
    <property type="development level" value="Tdark"/>
</dbReference>
<dbReference type="PRO" id="PR:O14990"/>
<dbReference type="Proteomes" id="UP000005640">
    <property type="component" value="Chromosome X"/>
</dbReference>
<dbReference type="RNAct" id="O14990">
    <property type="molecule type" value="protein"/>
</dbReference>
<dbReference type="Bgee" id="ENSG00000102055">
    <property type="expression patterns" value="Expressed in left testis and 55 other cell types or tissues"/>
</dbReference>
<dbReference type="GO" id="GO:0004864">
    <property type="term" value="F:protein phosphatase inhibitor activity"/>
    <property type="evidence" value="ECO:0000318"/>
    <property type="project" value="GO_Central"/>
</dbReference>
<dbReference type="GO" id="GO:0035556">
    <property type="term" value="P:intracellular signal transduction"/>
    <property type="evidence" value="ECO:0000318"/>
    <property type="project" value="GO_Central"/>
</dbReference>
<dbReference type="GO" id="GO:0009966">
    <property type="term" value="P:regulation of signal transduction"/>
    <property type="evidence" value="ECO:0007669"/>
    <property type="project" value="InterPro"/>
</dbReference>
<dbReference type="Gene3D" id="6.10.250.1050">
    <property type="match status" value="2"/>
</dbReference>
<dbReference type="InterPro" id="IPR007062">
    <property type="entry name" value="PPI-2"/>
</dbReference>
<dbReference type="PANTHER" id="PTHR12398">
    <property type="entry name" value="PROTEIN PHOSPHATASE INHIBITOR"/>
    <property type="match status" value="1"/>
</dbReference>
<dbReference type="PANTHER" id="PTHR12398:SF29">
    <property type="entry name" value="PROTEIN PHOSPHATASE INHIBITOR 2 FAMILY MEMBER C"/>
    <property type="match status" value="1"/>
</dbReference>
<dbReference type="Pfam" id="PF04979">
    <property type="entry name" value="IPP-2"/>
    <property type="match status" value="1"/>
</dbReference>
<reference key="1">
    <citation type="journal article" date="2000" name="Biochemistry">
        <title>Identification and characterization of a novel protein inhibitor of type 1 protein phosphatase.</title>
        <authorList>
            <person name="Shirato H."/>
            <person name="Shima H."/>
            <person name="Sakashita G."/>
            <person name="Nakano T."/>
            <person name="Ito M."/>
            <person name="Lee Y.E."/>
            <person name="Kikuchi K."/>
        </authorList>
    </citation>
    <scope>NUCLEOTIDE SEQUENCE [MRNA]</scope>
    <scope>FUNCTION</scope>
</reference>
<reference key="2">
    <citation type="journal article" date="2005" name="Nature">
        <title>The DNA sequence of the human X chromosome.</title>
        <authorList>
            <person name="Ross M.T."/>
            <person name="Grafham D.V."/>
            <person name="Coffey A.J."/>
            <person name="Scherer S."/>
            <person name="McLay K."/>
            <person name="Muzny D."/>
            <person name="Platzer M."/>
            <person name="Howell G.R."/>
            <person name="Burrows C."/>
            <person name="Bird C.P."/>
            <person name="Frankish A."/>
            <person name="Lovell F.L."/>
            <person name="Howe K.L."/>
            <person name="Ashurst J.L."/>
            <person name="Fulton R.S."/>
            <person name="Sudbrak R."/>
            <person name="Wen G."/>
            <person name="Jones M.C."/>
            <person name="Hurles M.E."/>
            <person name="Andrews T.D."/>
            <person name="Scott C.E."/>
            <person name="Searle S."/>
            <person name="Ramser J."/>
            <person name="Whittaker A."/>
            <person name="Deadman R."/>
            <person name="Carter N.P."/>
            <person name="Hunt S.E."/>
            <person name="Chen R."/>
            <person name="Cree A."/>
            <person name="Gunaratne P."/>
            <person name="Havlak P."/>
            <person name="Hodgson A."/>
            <person name="Metzker M.L."/>
            <person name="Richards S."/>
            <person name="Scott G."/>
            <person name="Steffen D."/>
            <person name="Sodergren E."/>
            <person name="Wheeler D.A."/>
            <person name="Worley K.C."/>
            <person name="Ainscough R."/>
            <person name="Ambrose K.D."/>
            <person name="Ansari-Lari M.A."/>
            <person name="Aradhya S."/>
            <person name="Ashwell R.I."/>
            <person name="Babbage A.K."/>
            <person name="Bagguley C.L."/>
            <person name="Ballabio A."/>
            <person name="Banerjee R."/>
            <person name="Barker G.E."/>
            <person name="Barlow K.F."/>
            <person name="Barrett I.P."/>
            <person name="Bates K.N."/>
            <person name="Beare D.M."/>
            <person name="Beasley H."/>
            <person name="Beasley O."/>
            <person name="Beck A."/>
            <person name="Bethel G."/>
            <person name="Blechschmidt K."/>
            <person name="Brady N."/>
            <person name="Bray-Allen S."/>
            <person name="Bridgeman A.M."/>
            <person name="Brown A.J."/>
            <person name="Brown M.J."/>
            <person name="Bonnin D."/>
            <person name="Bruford E.A."/>
            <person name="Buhay C."/>
            <person name="Burch P."/>
            <person name="Burford D."/>
            <person name="Burgess J."/>
            <person name="Burrill W."/>
            <person name="Burton J."/>
            <person name="Bye J.M."/>
            <person name="Carder C."/>
            <person name="Carrel L."/>
            <person name="Chako J."/>
            <person name="Chapman J.C."/>
            <person name="Chavez D."/>
            <person name="Chen E."/>
            <person name="Chen G."/>
            <person name="Chen Y."/>
            <person name="Chen Z."/>
            <person name="Chinault C."/>
            <person name="Ciccodicola A."/>
            <person name="Clark S.Y."/>
            <person name="Clarke G."/>
            <person name="Clee C.M."/>
            <person name="Clegg S."/>
            <person name="Clerc-Blankenburg K."/>
            <person name="Clifford K."/>
            <person name="Cobley V."/>
            <person name="Cole C.G."/>
            <person name="Conquer J.S."/>
            <person name="Corby N."/>
            <person name="Connor R.E."/>
            <person name="David R."/>
            <person name="Davies J."/>
            <person name="Davis C."/>
            <person name="Davis J."/>
            <person name="Delgado O."/>
            <person name="Deshazo D."/>
            <person name="Dhami P."/>
            <person name="Ding Y."/>
            <person name="Dinh H."/>
            <person name="Dodsworth S."/>
            <person name="Draper H."/>
            <person name="Dugan-Rocha S."/>
            <person name="Dunham A."/>
            <person name="Dunn M."/>
            <person name="Durbin K.J."/>
            <person name="Dutta I."/>
            <person name="Eades T."/>
            <person name="Ellwood M."/>
            <person name="Emery-Cohen A."/>
            <person name="Errington H."/>
            <person name="Evans K.L."/>
            <person name="Faulkner L."/>
            <person name="Francis F."/>
            <person name="Frankland J."/>
            <person name="Fraser A.E."/>
            <person name="Galgoczy P."/>
            <person name="Gilbert J."/>
            <person name="Gill R."/>
            <person name="Gloeckner G."/>
            <person name="Gregory S.G."/>
            <person name="Gribble S."/>
            <person name="Griffiths C."/>
            <person name="Grocock R."/>
            <person name="Gu Y."/>
            <person name="Gwilliam R."/>
            <person name="Hamilton C."/>
            <person name="Hart E.A."/>
            <person name="Hawes A."/>
            <person name="Heath P.D."/>
            <person name="Heitmann K."/>
            <person name="Hennig S."/>
            <person name="Hernandez J."/>
            <person name="Hinzmann B."/>
            <person name="Ho S."/>
            <person name="Hoffs M."/>
            <person name="Howden P.J."/>
            <person name="Huckle E.J."/>
            <person name="Hume J."/>
            <person name="Hunt P.J."/>
            <person name="Hunt A.R."/>
            <person name="Isherwood J."/>
            <person name="Jacob L."/>
            <person name="Johnson D."/>
            <person name="Jones S."/>
            <person name="de Jong P.J."/>
            <person name="Joseph S.S."/>
            <person name="Keenan S."/>
            <person name="Kelly S."/>
            <person name="Kershaw J.K."/>
            <person name="Khan Z."/>
            <person name="Kioschis P."/>
            <person name="Klages S."/>
            <person name="Knights A.J."/>
            <person name="Kosiura A."/>
            <person name="Kovar-Smith C."/>
            <person name="Laird G.K."/>
            <person name="Langford C."/>
            <person name="Lawlor S."/>
            <person name="Leversha M."/>
            <person name="Lewis L."/>
            <person name="Liu W."/>
            <person name="Lloyd C."/>
            <person name="Lloyd D.M."/>
            <person name="Loulseged H."/>
            <person name="Loveland J.E."/>
            <person name="Lovell J.D."/>
            <person name="Lozado R."/>
            <person name="Lu J."/>
            <person name="Lyne R."/>
            <person name="Ma J."/>
            <person name="Maheshwari M."/>
            <person name="Matthews L.H."/>
            <person name="McDowall J."/>
            <person name="McLaren S."/>
            <person name="McMurray A."/>
            <person name="Meidl P."/>
            <person name="Meitinger T."/>
            <person name="Milne S."/>
            <person name="Miner G."/>
            <person name="Mistry S.L."/>
            <person name="Morgan M."/>
            <person name="Morris S."/>
            <person name="Mueller I."/>
            <person name="Mullikin J.C."/>
            <person name="Nguyen N."/>
            <person name="Nordsiek G."/>
            <person name="Nyakatura G."/>
            <person name="O'dell C.N."/>
            <person name="Okwuonu G."/>
            <person name="Palmer S."/>
            <person name="Pandian R."/>
            <person name="Parker D."/>
            <person name="Parrish J."/>
            <person name="Pasternak S."/>
            <person name="Patel D."/>
            <person name="Pearce A.V."/>
            <person name="Pearson D.M."/>
            <person name="Pelan S.E."/>
            <person name="Perez L."/>
            <person name="Porter K.M."/>
            <person name="Ramsey Y."/>
            <person name="Reichwald K."/>
            <person name="Rhodes S."/>
            <person name="Ridler K.A."/>
            <person name="Schlessinger D."/>
            <person name="Schueler M.G."/>
            <person name="Sehra H.K."/>
            <person name="Shaw-Smith C."/>
            <person name="Shen H."/>
            <person name="Sheridan E.M."/>
            <person name="Shownkeen R."/>
            <person name="Skuce C.D."/>
            <person name="Smith M.L."/>
            <person name="Sotheran E.C."/>
            <person name="Steingruber H.E."/>
            <person name="Steward C.A."/>
            <person name="Storey R."/>
            <person name="Swann R.M."/>
            <person name="Swarbreck D."/>
            <person name="Tabor P.E."/>
            <person name="Taudien S."/>
            <person name="Taylor T."/>
            <person name="Teague B."/>
            <person name="Thomas K."/>
            <person name="Thorpe A."/>
            <person name="Timms K."/>
            <person name="Tracey A."/>
            <person name="Trevanion S."/>
            <person name="Tromans A.C."/>
            <person name="d'Urso M."/>
            <person name="Verduzco D."/>
            <person name="Villasana D."/>
            <person name="Waldron L."/>
            <person name="Wall M."/>
            <person name="Wang Q."/>
            <person name="Warren J."/>
            <person name="Warry G.L."/>
            <person name="Wei X."/>
            <person name="West A."/>
            <person name="Whitehead S.L."/>
            <person name="Whiteley M.N."/>
            <person name="Wilkinson J.E."/>
            <person name="Willey D.L."/>
            <person name="Williams G."/>
            <person name="Williams L."/>
            <person name="Williamson A."/>
            <person name="Williamson H."/>
            <person name="Wilming L."/>
            <person name="Woodmansey R.L."/>
            <person name="Wray P.W."/>
            <person name="Yen J."/>
            <person name="Zhang J."/>
            <person name="Zhou J."/>
            <person name="Zoghbi H."/>
            <person name="Zorilla S."/>
            <person name="Buck D."/>
            <person name="Reinhardt R."/>
            <person name="Poustka A."/>
            <person name="Rosenthal A."/>
            <person name="Lehrach H."/>
            <person name="Meindl A."/>
            <person name="Minx P.J."/>
            <person name="Hillier L.W."/>
            <person name="Willard H.F."/>
            <person name="Wilson R.K."/>
            <person name="Waterston R.H."/>
            <person name="Rice C.M."/>
            <person name="Vaudin M."/>
            <person name="Coulson A."/>
            <person name="Nelson D.L."/>
            <person name="Weinstock G."/>
            <person name="Sulston J.E."/>
            <person name="Durbin R.M."/>
            <person name="Hubbard T."/>
            <person name="Gibbs R.A."/>
            <person name="Beck S."/>
            <person name="Rogers J."/>
            <person name="Bentley D.R."/>
        </authorList>
    </citation>
    <scope>NUCLEOTIDE SEQUENCE [LARGE SCALE GENOMIC DNA]</scope>
</reference>
<reference key="3">
    <citation type="journal article" date="2004" name="Genome Res.">
        <title>The status, quality, and expansion of the NIH full-length cDNA project: the Mammalian Gene Collection (MGC).</title>
        <authorList>
            <consortium name="The MGC Project Team"/>
        </authorList>
    </citation>
    <scope>NUCLEOTIDE SEQUENCE [LARGE SCALE MRNA]</scope>
    <source>
        <tissue>Testis</tissue>
    </source>
</reference>
<reference key="4">
    <citation type="journal article" date="2013" name="BMC Evol. Biol.">
        <title>Not so pseudo: the evolutionary history of protein phosphatase 1 regulatory subunit 2 and related pseudogenes.</title>
        <authorList>
            <person name="Korrodi-Gregorio L."/>
            <person name="Abrantes J."/>
            <person name="Muller T."/>
            <person name="Melo-Ferreira J."/>
            <person name="Marcus K."/>
            <person name="da Cruz e Silva O.A."/>
            <person name="Fardilha M."/>
            <person name="Esteves P.J."/>
        </authorList>
    </citation>
    <scope>IDENTIFICATION BY MASS SPECTROMETRY</scope>
    <scope>TISSUE SPECIFICITY</scope>
</reference>
<name>IPP2C_HUMAN</name>
<keyword id="KW-0650">Protein phosphatase inhibitor</keyword>
<keyword id="KW-1267">Proteomics identification</keyword>
<keyword id="KW-1185">Reference proteome</keyword>
<feature type="chain" id="PRO_0000071485" description="Protein phosphatase inhibitor 2 family member C">
    <location>
        <begin position="1"/>
        <end position="202"/>
    </location>
</feature>
<feature type="region of interest" description="Disordered" evidence="2">
    <location>
        <begin position="1"/>
        <end position="51"/>
    </location>
</feature>
<feature type="region of interest" description="Required for binding PPP1CC" evidence="1">
    <location>
        <begin position="12"/>
        <end position="17"/>
    </location>
</feature>
<feature type="region of interest" description="Required for binding PPP1CC" evidence="1">
    <location>
        <begin position="43"/>
        <end position="55"/>
    </location>
</feature>
<feature type="region of interest" description="Disordered" evidence="2">
    <location>
        <begin position="71"/>
        <end position="118"/>
    </location>
</feature>
<feature type="region of interest" description="Required for binding PPP1CC catalytic center, displacing metal ions and inhibition of PPP1CC catalytic activity" evidence="1">
    <location>
        <begin position="144"/>
        <end position="147"/>
    </location>
</feature>
<feature type="region of interest" description="Disordered" evidence="2">
    <location>
        <begin position="162"/>
        <end position="202"/>
    </location>
</feature>
<feature type="compositionally biased region" description="Low complexity" evidence="2">
    <location>
        <begin position="19"/>
        <end position="35"/>
    </location>
</feature>
<feature type="compositionally biased region" description="Polar residues" evidence="2">
    <location>
        <begin position="71"/>
        <end position="80"/>
    </location>
</feature>
<feature type="compositionally biased region" description="Basic and acidic residues" evidence="2">
    <location>
        <begin position="84"/>
        <end position="112"/>
    </location>
</feature>
<protein>
    <recommendedName>
        <fullName evidence="5">Protein phosphatase inhibitor 2 family member C</fullName>
    </recommendedName>
    <alternativeName>
        <fullName>PPP1R2 family member B</fullName>
    </alternativeName>
    <alternativeName>
        <fullName>Protein phosphatase 1, regulatory subunit 2 pseudogene 9</fullName>
    </alternativeName>
    <alternativeName>
        <fullName>Type-1 protein phosphatase inhibitor 4</fullName>
        <shortName>I-4</shortName>
    </alternativeName>
</protein>
<accession>O14990</accession>
<accession>Q5H958</accession>
<proteinExistence type="evidence at protein level"/>
<gene>
    <name evidence="6" type="primary">PPP1R2C</name>
    <name type="synonym">PPP1R2P9</name>
</gene>
<evidence type="ECO:0000250" key="1"/>
<evidence type="ECO:0000256" key="2">
    <source>
        <dbReference type="SAM" id="MobiDB-lite"/>
    </source>
</evidence>
<evidence type="ECO:0000269" key="3">
    <source>
    </source>
</evidence>
<evidence type="ECO:0000269" key="4">
    <source>
    </source>
</evidence>
<evidence type="ECO:0000305" key="5"/>
<evidence type="ECO:0000312" key="6">
    <source>
        <dbReference type="HGNC" id="HGNC:16324"/>
    </source>
</evidence>
<sequence length="202" mass="22660">MSASTSSHRPIKGILKNKSSSGSSVATSGQQSGGTIQDVKRKKSQKWDESSILAAHRATYRDYDLMKANEPGTSYMSVQDNGEDSVRDVEGEDSVRGVEGKEATDASDHSCEVDEQESSEAYMRKILLHKQEKKRQFEMRRRLHYNEELNIKLARQLMWKELQSEDNENEETPQGTNEEKTAAEESEEAPLTGGLQTQSCDP</sequence>
<comment type="function">
    <text evidence="3">Functions as a protein phosphatase inhibitor. It inhibits activity of the catalytic subunit of PP1 and weakly inhibits the activity of myosin-associated phosphates.</text>
</comment>
<comment type="interaction">
    <interactant intactId="EBI-12404293">
        <id>O14990</id>
    </interactant>
    <interactant intactId="EBI-357253">
        <id>P62136</id>
        <label>PPP1CA</label>
    </interactant>
    <organismsDiffer>false</organismsDiffer>
    <experiments>3</experiments>
</comment>
<comment type="interaction">
    <interactant intactId="EBI-12404293">
        <id>O14990</id>
    </interactant>
    <interactant intactId="EBI-352350">
        <id>P62140</id>
        <label>PPP1CB</label>
    </interactant>
    <organismsDiffer>false</organismsDiffer>
    <experiments>5</experiments>
</comment>
<comment type="interaction">
    <interactant intactId="EBI-12404293">
        <id>O14990</id>
    </interactant>
    <interactant intactId="EBI-356283">
        <id>P36873</id>
        <label>PPP1CC</label>
    </interactant>
    <organismsDiffer>false</organismsDiffer>
    <experiments>3</experiments>
</comment>
<comment type="tissue specificity">
    <text evidence="4">Detected in sperm (at protein level).</text>
</comment>
<comment type="similarity">
    <text evidence="5">Belongs to the protein phosphatase inhibitor 2 family.</text>
</comment>